<protein>
    <recommendedName>
        <fullName evidence="1">1-(5-phosphoribosyl)-5-[(5-phosphoribosylamino)methylideneamino] imidazole-4-carboxamide isomerase</fullName>
        <ecNumber evidence="1">5.3.1.16</ecNumber>
    </recommendedName>
    <alternativeName>
        <fullName evidence="1">Phosphoribosylformimino-5-aminoimidazole carboxamide ribotide isomerase</fullName>
    </alternativeName>
</protein>
<name>HIS4_PARP8</name>
<evidence type="ECO:0000255" key="1">
    <source>
        <dbReference type="HAMAP-Rule" id="MF_01014"/>
    </source>
</evidence>
<reference key="1">
    <citation type="journal article" date="2014" name="Stand. Genomic Sci.">
        <title>Complete genome sequence of Burkholderia phymatum STM815(T), a broad host range and efficient nitrogen-fixing symbiont of Mimosa species.</title>
        <authorList>
            <person name="Moulin L."/>
            <person name="Klonowska A."/>
            <person name="Caroline B."/>
            <person name="Booth K."/>
            <person name="Vriezen J.A."/>
            <person name="Melkonian R."/>
            <person name="James E.K."/>
            <person name="Young J.P."/>
            <person name="Bena G."/>
            <person name="Hauser L."/>
            <person name="Land M."/>
            <person name="Kyrpides N."/>
            <person name="Bruce D."/>
            <person name="Chain P."/>
            <person name="Copeland A."/>
            <person name="Pitluck S."/>
            <person name="Woyke T."/>
            <person name="Lizotte-Waniewski M."/>
            <person name="Bristow J."/>
            <person name="Riley M."/>
        </authorList>
    </citation>
    <scope>NUCLEOTIDE SEQUENCE [LARGE SCALE GENOMIC DNA]</scope>
    <source>
        <strain>DSM 17167 / CIP 108236 / LMG 21445 / STM815</strain>
    </source>
</reference>
<sequence>MLLIPAIDLKDGQCVRLKQGDMDQATIFHEEPAVMARHWVDRGARRLHLVDLNGAFAGKPKNEDAIRAIIEEVGGEIPVQLGGGIRDLNTIERYLDDGLEYVIIGTAAVKNPGFLLEACTAFGGHIIVGLDAKDGKVATDGWSKLTGHEVADLARKFEDYGCESIIYTDIGRDGMLQGINIEATVRLARAVKIPVIASGGLSNLGDIEALCEVEDEGIEGVICGRAIYSGDLDFAAAQTHADRLRESDDA</sequence>
<comment type="catalytic activity">
    <reaction evidence="1">
        <text>1-(5-phospho-beta-D-ribosyl)-5-[(5-phospho-beta-D-ribosylamino)methylideneamino]imidazole-4-carboxamide = 5-[(5-phospho-1-deoxy-D-ribulos-1-ylimino)methylamino]-1-(5-phospho-beta-D-ribosyl)imidazole-4-carboxamide</text>
        <dbReference type="Rhea" id="RHEA:15469"/>
        <dbReference type="ChEBI" id="CHEBI:58435"/>
        <dbReference type="ChEBI" id="CHEBI:58525"/>
        <dbReference type="EC" id="5.3.1.16"/>
    </reaction>
</comment>
<comment type="pathway">
    <text evidence="1">Amino-acid biosynthesis; L-histidine biosynthesis; L-histidine from 5-phospho-alpha-D-ribose 1-diphosphate: step 4/9.</text>
</comment>
<comment type="subcellular location">
    <subcellularLocation>
        <location evidence="1">Cytoplasm</location>
    </subcellularLocation>
</comment>
<comment type="similarity">
    <text evidence="1">Belongs to the HisA/HisF family.</text>
</comment>
<accession>B2JHY0</accession>
<proteinExistence type="inferred from homology"/>
<gene>
    <name evidence="1" type="primary">hisA</name>
    <name type="ordered locus">Bphy_2754</name>
</gene>
<organism>
    <name type="scientific">Paraburkholderia phymatum (strain DSM 17167 / CIP 108236 / LMG 21445 / STM815)</name>
    <name type="common">Burkholderia phymatum</name>
    <dbReference type="NCBI Taxonomy" id="391038"/>
    <lineage>
        <taxon>Bacteria</taxon>
        <taxon>Pseudomonadati</taxon>
        <taxon>Pseudomonadota</taxon>
        <taxon>Betaproteobacteria</taxon>
        <taxon>Burkholderiales</taxon>
        <taxon>Burkholderiaceae</taxon>
        <taxon>Paraburkholderia</taxon>
    </lineage>
</organism>
<dbReference type="EC" id="5.3.1.16" evidence="1"/>
<dbReference type="EMBL" id="CP001043">
    <property type="protein sequence ID" value="ACC71926.1"/>
    <property type="molecule type" value="Genomic_DNA"/>
</dbReference>
<dbReference type="RefSeq" id="WP_012402124.1">
    <property type="nucleotide sequence ID" value="NC_010622.1"/>
</dbReference>
<dbReference type="SMR" id="B2JHY0"/>
<dbReference type="STRING" id="391038.Bphy_2754"/>
<dbReference type="KEGG" id="bph:Bphy_2754"/>
<dbReference type="eggNOG" id="COG0106">
    <property type="taxonomic scope" value="Bacteria"/>
</dbReference>
<dbReference type="HOGENOM" id="CLU_048577_1_1_4"/>
<dbReference type="OrthoDB" id="9807749at2"/>
<dbReference type="UniPathway" id="UPA00031">
    <property type="reaction ID" value="UER00009"/>
</dbReference>
<dbReference type="Proteomes" id="UP000001192">
    <property type="component" value="Chromosome 1"/>
</dbReference>
<dbReference type="GO" id="GO:0005737">
    <property type="term" value="C:cytoplasm"/>
    <property type="evidence" value="ECO:0007669"/>
    <property type="project" value="UniProtKB-SubCell"/>
</dbReference>
<dbReference type="GO" id="GO:0003949">
    <property type="term" value="F:1-(5-phosphoribosyl)-5-[(5-phosphoribosylamino)methylideneamino]imidazole-4-carboxamide isomerase activity"/>
    <property type="evidence" value="ECO:0007669"/>
    <property type="project" value="UniProtKB-UniRule"/>
</dbReference>
<dbReference type="GO" id="GO:0000105">
    <property type="term" value="P:L-histidine biosynthetic process"/>
    <property type="evidence" value="ECO:0007669"/>
    <property type="project" value="UniProtKB-UniRule"/>
</dbReference>
<dbReference type="GO" id="GO:0000162">
    <property type="term" value="P:L-tryptophan biosynthetic process"/>
    <property type="evidence" value="ECO:0007669"/>
    <property type="project" value="TreeGrafter"/>
</dbReference>
<dbReference type="CDD" id="cd04732">
    <property type="entry name" value="HisA"/>
    <property type="match status" value="1"/>
</dbReference>
<dbReference type="FunFam" id="3.20.20.70:FF:000009">
    <property type="entry name" value="1-(5-phosphoribosyl)-5-[(5-phosphoribosylamino)methylideneamino] imidazole-4-carboxamide isomerase"/>
    <property type="match status" value="1"/>
</dbReference>
<dbReference type="Gene3D" id="3.20.20.70">
    <property type="entry name" value="Aldolase class I"/>
    <property type="match status" value="1"/>
</dbReference>
<dbReference type="HAMAP" id="MF_01014">
    <property type="entry name" value="HisA"/>
    <property type="match status" value="1"/>
</dbReference>
<dbReference type="InterPro" id="IPR013785">
    <property type="entry name" value="Aldolase_TIM"/>
</dbReference>
<dbReference type="InterPro" id="IPR006062">
    <property type="entry name" value="His_biosynth"/>
</dbReference>
<dbReference type="InterPro" id="IPR006063">
    <property type="entry name" value="HisA_bact_arch"/>
</dbReference>
<dbReference type="InterPro" id="IPR044524">
    <property type="entry name" value="Isoase_HisA-like"/>
</dbReference>
<dbReference type="InterPro" id="IPR023016">
    <property type="entry name" value="Isoase_HisA-like_bact"/>
</dbReference>
<dbReference type="InterPro" id="IPR011060">
    <property type="entry name" value="RibuloseP-bd_barrel"/>
</dbReference>
<dbReference type="NCBIfam" id="TIGR00007">
    <property type="entry name" value="1-(5-phosphoribosyl)-5-[(5-phosphoribosylamino)methylideneamino]imidazole-4-carboxamide isomerase"/>
    <property type="match status" value="1"/>
</dbReference>
<dbReference type="NCBIfam" id="NF010112">
    <property type="entry name" value="PRK13585.1"/>
    <property type="match status" value="1"/>
</dbReference>
<dbReference type="PANTHER" id="PTHR43090">
    <property type="entry name" value="1-(5-PHOSPHORIBOSYL)-5-[(5-PHOSPHORIBOSYLAMINO)METHYLIDENEAMINO] IMIDAZOLE-4-CARBOXAMIDE ISOMERASE"/>
    <property type="match status" value="1"/>
</dbReference>
<dbReference type="PANTHER" id="PTHR43090:SF2">
    <property type="entry name" value="1-(5-PHOSPHORIBOSYL)-5-[(5-PHOSPHORIBOSYLAMINO)METHYLIDENEAMINO] IMIDAZOLE-4-CARBOXAMIDE ISOMERASE"/>
    <property type="match status" value="1"/>
</dbReference>
<dbReference type="Pfam" id="PF00977">
    <property type="entry name" value="His_biosynth"/>
    <property type="match status" value="1"/>
</dbReference>
<dbReference type="SUPFAM" id="SSF51366">
    <property type="entry name" value="Ribulose-phoshate binding barrel"/>
    <property type="match status" value="1"/>
</dbReference>
<feature type="chain" id="PRO_1000135090" description="1-(5-phosphoribosyl)-5-[(5-phosphoribosylamino)methylideneamino] imidazole-4-carboxamide isomerase">
    <location>
        <begin position="1"/>
        <end position="250"/>
    </location>
</feature>
<feature type="active site" description="Proton acceptor" evidence="1">
    <location>
        <position position="8"/>
    </location>
</feature>
<feature type="active site" description="Proton donor" evidence="1">
    <location>
        <position position="131"/>
    </location>
</feature>
<keyword id="KW-0028">Amino-acid biosynthesis</keyword>
<keyword id="KW-0963">Cytoplasm</keyword>
<keyword id="KW-0368">Histidine biosynthesis</keyword>
<keyword id="KW-0413">Isomerase</keyword>
<keyword id="KW-1185">Reference proteome</keyword>